<dbReference type="EMBL" id="AF033608">
    <property type="protein sequence ID" value="AAB92540.1"/>
    <property type="molecule type" value="Genomic_DNA"/>
</dbReference>
<dbReference type="GO" id="GO:0009507">
    <property type="term" value="C:chloroplast"/>
    <property type="evidence" value="ECO:0007669"/>
    <property type="project" value="UniProtKB-SubCell"/>
</dbReference>
<dbReference type="GO" id="GO:0003723">
    <property type="term" value="F:RNA binding"/>
    <property type="evidence" value="ECO:0007669"/>
    <property type="project" value="UniProtKB-KW"/>
</dbReference>
<dbReference type="GO" id="GO:0006397">
    <property type="term" value="P:mRNA processing"/>
    <property type="evidence" value="ECO:0007669"/>
    <property type="project" value="UniProtKB-KW"/>
</dbReference>
<dbReference type="GO" id="GO:0008380">
    <property type="term" value="P:RNA splicing"/>
    <property type="evidence" value="ECO:0007669"/>
    <property type="project" value="UniProtKB-UniRule"/>
</dbReference>
<dbReference type="GO" id="GO:0008033">
    <property type="term" value="P:tRNA processing"/>
    <property type="evidence" value="ECO:0007669"/>
    <property type="project" value="UniProtKB-KW"/>
</dbReference>
<dbReference type="HAMAP" id="MF_01390">
    <property type="entry name" value="MatK"/>
    <property type="match status" value="1"/>
</dbReference>
<dbReference type="InterPro" id="IPR024937">
    <property type="entry name" value="Domain_X"/>
</dbReference>
<dbReference type="InterPro" id="IPR002866">
    <property type="entry name" value="Maturase_MatK"/>
</dbReference>
<dbReference type="InterPro" id="IPR024942">
    <property type="entry name" value="Maturase_MatK_N"/>
</dbReference>
<dbReference type="PANTHER" id="PTHR34811">
    <property type="entry name" value="MATURASE K"/>
    <property type="match status" value="1"/>
</dbReference>
<dbReference type="PANTHER" id="PTHR34811:SF1">
    <property type="entry name" value="MATURASE K"/>
    <property type="match status" value="1"/>
</dbReference>
<dbReference type="Pfam" id="PF01348">
    <property type="entry name" value="Intron_maturas2"/>
    <property type="match status" value="1"/>
</dbReference>
<dbReference type="Pfam" id="PF01824">
    <property type="entry name" value="MatK_N"/>
    <property type="match status" value="1"/>
</dbReference>
<evidence type="ECO:0000255" key="1">
    <source>
        <dbReference type="HAMAP-Rule" id="MF_01390"/>
    </source>
</evidence>
<sequence length="496" mass="58540">MEKSQGYLELDKSWRHNFLYPLIFQEYIYALAHEQGLNRSILLENTDHDNKYSSLIVKRLITLIHQQNHFLIFDNDSNQNPFWKHNNNLYSQTISEGFVIIVEIPFSPRFVDSLEEKKKILKSNNLRSIHSIFPFLEDQILHLNFVANILIPYPIHLEIVVQSLRYRVKDASSLHLLRFFLFTLNKSISSFSKRNQRFFLFLYNSHVYEYESTFLFLRNKTSHLRSTSSGAFLERIFFYGKIKHLIEVFANDFQAILWLFKDPFMHYVRYQGKSILASKRTSLRMNKWKYYLVNFWQCQFYVWSQPGRVSINQLSNHSLDFLGYLSSVRRNPLAVRSQMLENSFLTDNAIKKFDIIVLLISLIGSLAKAKFCNVLGHPLSKPARADSSDSDIIERFVRICRNLSHYHSGSSKKKSLYRIKYILRLSCARTLARKHKTTVRSFLKRLGSELLEEFLTEDGQVISLIFPRTSSTSWRLYRGGIWYLDITCINDLANHE</sequence>
<geneLocation type="chloroplast"/>
<gene>
    <name evidence="1" type="primary">matK</name>
</gene>
<organism>
    <name type="scientific">Paeonia cambessedesii</name>
    <name type="common">Majorcan peony</name>
    <name type="synonym">Paeonia corallina var. cambessedesii</name>
    <dbReference type="NCBI Taxonomy" id="40704"/>
    <lineage>
        <taxon>Eukaryota</taxon>
        <taxon>Viridiplantae</taxon>
        <taxon>Streptophyta</taxon>
        <taxon>Embryophyta</taxon>
        <taxon>Tracheophyta</taxon>
        <taxon>Spermatophyta</taxon>
        <taxon>Magnoliopsida</taxon>
        <taxon>eudicotyledons</taxon>
        <taxon>Gunneridae</taxon>
        <taxon>Pentapetalae</taxon>
        <taxon>Saxifragales</taxon>
        <taxon>Paeoniaceae</taxon>
        <taxon>Paeonia</taxon>
    </lineage>
</organism>
<feature type="chain" id="PRO_0000143566" description="Maturase K">
    <location>
        <begin position="1"/>
        <end position="496"/>
    </location>
</feature>
<name>MATK_PAECA</name>
<keyword id="KW-0150">Chloroplast</keyword>
<keyword id="KW-0507">mRNA processing</keyword>
<keyword id="KW-0934">Plastid</keyword>
<keyword id="KW-0694">RNA-binding</keyword>
<keyword id="KW-0819">tRNA processing</keyword>
<accession>P68753</accession>
<accession>O48302</accession>
<reference key="1">
    <citation type="journal article" date="1997" name="Am. J. Bot.">
        <title>Chloroplast DNA phylogeny, reticulate evolution, and biogeography of Paeonia (Paeoniaceae).</title>
        <authorList>
            <person name="Sang T."/>
            <person name="Crawford D.J."/>
            <person name="Stuessy T.F."/>
        </authorList>
    </citation>
    <scope>NUCLEOTIDE SEQUENCE [GENOMIC DNA]</scope>
</reference>
<proteinExistence type="inferred from homology"/>
<protein>
    <recommendedName>
        <fullName evidence="1">Maturase K</fullName>
    </recommendedName>
    <alternativeName>
        <fullName evidence="1">Intron maturase</fullName>
    </alternativeName>
</protein>
<comment type="function">
    <text evidence="1">Usually encoded in the trnK tRNA gene intron. Probably assists in splicing its own and other chloroplast group II introns.</text>
</comment>
<comment type="subcellular location">
    <subcellularLocation>
        <location>Plastid</location>
        <location>Chloroplast</location>
    </subcellularLocation>
</comment>
<comment type="similarity">
    <text evidence="1">Belongs to the intron maturase 2 family. MatK subfamily.</text>
</comment>